<protein>
    <recommendedName>
        <fullName evidence="1">3,4-dihydroxy-2-butanone 4-phosphate synthase</fullName>
        <shortName evidence="1">DHBP synthase</shortName>
        <ecNumber evidence="1">4.1.99.12</ecNumber>
    </recommendedName>
</protein>
<keyword id="KW-0456">Lyase</keyword>
<keyword id="KW-0460">Magnesium</keyword>
<keyword id="KW-0464">Manganese</keyword>
<keyword id="KW-0479">Metal-binding</keyword>
<keyword id="KW-1185">Reference proteome</keyword>
<keyword id="KW-0686">Riboflavin biosynthesis</keyword>
<dbReference type="EC" id="4.1.99.12" evidence="1"/>
<dbReference type="EMBL" id="CP001100">
    <property type="protein sequence ID" value="ACF13217.1"/>
    <property type="molecule type" value="Genomic_DNA"/>
</dbReference>
<dbReference type="RefSeq" id="WP_012499301.1">
    <property type="nucleotide sequence ID" value="NC_011026.1"/>
</dbReference>
<dbReference type="SMR" id="B3QWA4"/>
<dbReference type="STRING" id="517418.Ctha_0748"/>
<dbReference type="KEGG" id="cts:Ctha_0748"/>
<dbReference type="eggNOG" id="COG0108">
    <property type="taxonomic scope" value="Bacteria"/>
</dbReference>
<dbReference type="HOGENOM" id="CLU_020273_3_0_10"/>
<dbReference type="OrthoDB" id="9793111at2"/>
<dbReference type="UniPathway" id="UPA00275">
    <property type="reaction ID" value="UER00399"/>
</dbReference>
<dbReference type="Proteomes" id="UP000001208">
    <property type="component" value="Chromosome"/>
</dbReference>
<dbReference type="GO" id="GO:0005829">
    <property type="term" value="C:cytosol"/>
    <property type="evidence" value="ECO:0007669"/>
    <property type="project" value="TreeGrafter"/>
</dbReference>
<dbReference type="GO" id="GO:0008686">
    <property type="term" value="F:3,4-dihydroxy-2-butanone-4-phosphate synthase activity"/>
    <property type="evidence" value="ECO:0007669"/>
    <property type="project" value="UniProtKB-UniRule"/>
</dbReference>
<dbReference type="GO" id="GO:0000287">
    <property type="term" value="F:magnesium ion binding"/>
    <property type="evidence" value="ECO:0007669"/>
    <property type="project" value="UniProtKB-UniRule"/>
</dbReference>
<dbReference type="GO" id="GO:0030145">
    <property type="term" value="F:manganese ion binding"/>
    <property type="evidence" value="ECO:0007669"/>
    <property type="project" value="UniProtKB-UniRule"/>
</dbReference>
<dbReference type="GO" id="GO:0009231">
    <property type="term" value="P:riboflavin biosynthetic process"/>
    <property type="evidence" value="ECO:0007669"/>
    <property type="project" value="UniProtKB-UniRule"/>
</dbReference>
<dbReference type="FunFam" id="3.90.870.10:FF:000002">
    <property type="entry name" value="3,4-dihydroxy-2-butanone 4-phosphate synthase"/>
    <property type="match status" value="1"/>
</dbReference>
<dbReference type="Gene3D" id="3.90.870.10">
    <property type="entry name" value="DHBP synthase"/>
    <property type="match status" value="1"/>
</dbReference>
<dbReference type="HAMAP" id="MF_00180">
    <property type="entry name" value="RibB"/>
    <property type="match status" value="1"/>
</dbReference>
<dbReference type="InterPro" id="IPR017945">
    <property type="entry name" value="DHBP_synth_RibB-like_a/b_dom"/>
</dbReference>
<dbReference type="InterPro" id="IPR000422">
    <property type="entry name" value="DHBP_synthase_RibB"/>
</dbReference>
<dbReference type="NCBIfam" id="TIGR00506">
    <property type="entry name" value="ribB"/>
    <property type="match status" value="1"/>
</dbReference>
<dbReference type="PANTHER" id="PTHR21327:SF38">
    <property type="entry name" value="3,4-DIHYDROXY-2-BUTANONE 4-PHOSPHATE SYNTHASE"/>
    <property type="match status" value="1"/>
</dbReference>
<dbReference type="PANTHER" id="PTHR21327">
    <property type="entry name" value="GTP CYCLOHYDROLASE II-RELATED"/>
    <property type="match status" value="1"/>
</dbReference>
<dbReference type="Pfam" id="PF00926">
    <property type="entry name" value="DHBP_synthase"/>
    <property type="match status" value="1"/>
</dbReference>
<dbReference type="SUPFAM" id="SSF55821">
    <property type="entry name" value="YrdC/RibB"/>
    <property type="match status" value="1"/>
</dbReference>
<proteinExistence type="inferred from homology"/>
<name>RIBB_CHLT3</name>
<evidence type="ECO:0000255" key="1">
    <source>
        <dbReference type="HAMAP-Rule" id="MF_00180"/>
    </source>
</evidence>
<organism>
    <name type="scientific">Chloroherpeton thalassium (strain ATCC 35110 / GB-78)</name>
    <dbReference type="NCBI Taxonomy" id="517418"/>
    <lineage>
        <taxon>Bacteria</taxon>
        <taxon>Pseudomonadati</taxon>
        <taxon>Chlorobiota</taxon>
        <taxon>Chlorobiia</taxon>
        <taxon>Chlorobiales</taxon>
        <taxon>Chloroherpetonaceae</taxon>
        <taxon>Chloroherpeton</taxon>
    </lineage>
</organism>
<sequence length="228" mass="24781">MNPLLEKKFGDEFTRVENALTALRSGKGILVSDSPDRENEADLIFSAEFLTETQMAMLIRECSGIVCLCLTTEKVQALALPMMVSENTSGFQTAFTVSIEAKTGVKTGVSAADRVRTVKTAIAADAKPEELARPGHVFPLRARTGGVLERPGHTEATVDLMRLAGLSPYGVLCELTNPDGTMANLDEAIAFAEKHDFPVLTVEDVINYRLEKEREKSASPALFSVFEN</sequence>
<reference key="1">
    <citation type="submission" date="2008-06" db="EMBL/GenBank/DDBJ databases">
        <title>Complete sequence of Chloroherpeton thalassium ATCC 35110.</title>
        <authorList>
            <consortium name="US DOE Joint Genome Institute"/>
            <person name="Lucas S."/>
            <person name="Copeland A."/>
            <person name="Lapidus A."/>
            <person name="Glavina del Rio T."/>
            <person name="Dalin E."/>
            <person name="Tice H."/>
            <person name="Bruce D."/>
            <person name="Goodwin L."/>
            <person name="Pitluck S."/>
            <person name="Schmutz J."/>
            <person name="Larimer F."/>
            <person name="Land M."/>
            <person name="Hauser L."/>
            <person name="Kyrpides N."/>
            <person name="Mikhailova N."/>
            <person name="Liu Z."/>
            <person name="Li T."/>
            <person name="Zhao F."/>
            <person name="Overmann J."/>
            <person name="Bryant D.A."/>
            <person name="Richardson P."/>
        </authorList>
    </citation>
    <scope>NUCLEOTIDE SEQUENCE [LARGE SCALE GENOMIC DNA]</scope>
    <source>
        <strain>ATCC 35110 / GB-78</strain>
    </source>
</reference>
<feature type="chain" id="PRO_1000098276" description="3,4-dihydroxy-2-butanone 4-phosphate synthase">
    <location>
        <begin position="1"/>
        <end position="228"/>
    </location>
</feature>
<feature type="binding site" evidence="1">
    <location>
        <begin position="37"/>
        <end position="38"/>
    </location>
    <ligand>
        <name>D-ribulose 5-phosphate</name>
        <dbReference type="ChEBI" id="CHEBI:58121"/>
    </ligand>
</feature>
<feature type="binding site" evidence="1">
    <location>
        <position position="38"/>
    </location>
    <ligand>
        <name>Mg(2+)</name>
        <dbReference type="ChEBI" id="CHEBI:18420"/>
        <label>1</label>
    </ligand>
</feature>
<feature type="binding site" evidence="1">
    <location>
        <position position="38"/>
    </location>
    <ligand>
        <name>Mg(2+)</name>
        <dbReference type="ChEBI" id="CHEBI:18420"/>
        <label>2</label>
    </ligand>
</feature>
<feature type="binding site" evidence="1">
    <location>
        <position position="42"/>
    </location>
    <ligand>
        <name>D-ribulose 5-phosphate</name>
        <dbReference type="ChEBI" id="CHEBI:58121"/>
    </ligand>
</feature>
<feature type="binding site" evidence="1">
    <location>
        <begin position="150"/>
        <end position="154"/>
    </location>
    <ligand>
        <name>D-ribulose 5-phosphate</name>
        <dbReference type="ChEBI" id="CHEBI:58121"/>
    </ligand>
</feature>
<feature type="binding site" evidence="1">
    <location>
        <position position="153"/>
    </location>
    <ligand>
        <name>Mg(2+)</name>
        <dbReference type="ChEBI" id="CHEBI:18420"/>
        <label>2</label>
    </ligand>
</feature>
<feature type="binding site" evidence="1">
    <location>
        <position position="174"/>
    </location>
    <ligand>
        <name>D-ribulose 5-phosphate</name>
        <dbReference type="ChEBI" id="CHEBI:58121"/>
    </ligand>
</feature>
<feature type="site" description="Essential for catalytic activity" evidence="1">
    <location>
        <position position="136"/>
    </location>
</feature>
<feature type="site" description="Essential for catalytic activity" evidence="1">
    <location>
        <position position="174"/>
    </location>
</feature>
<accession>B3QWA4</accession>
<gene>
    <name evidence="1" type="primary">ribB</name>
    <name type="ordered locus">Ctha_0748</name>
</gene>
<comment type="function">
    <text evidence="1">Catalyzes the conversion of D-ribulose 5-phosphate to formate and 3,4-dihydroxy-2-butanone 4-phosphate.</text>
</comment>
<comment type="catalytic activity">
    <reaction evidence="1">
        <text>D-ribulose 5-phosphate = (2S)-2-hydroxy-3-oxobutyl phosphate + formate + H(+)</text>
        <dbReference type="Rhea" id="RHEA:18457"/>
        <dbReference type="ChEBI" id="CHEBI:15378"/>
        <dbReference type="ChEBI" id="CHEBI:15740"/>
        <dbReference type="ChEBI" id="CHEBI:58121"/>
        <dbReference type="ChEBI" id="CHEBI:58830"/>
        <dbReference type="EC" id="4.1.99.12"/>
    </reaction>
</comment>
<comment type="cofactor">
    <cofactor evidence="1">
        <name>Mg(2+)</name>
        <dbReference type="ChEBI" id="CHEBI:18420"/>
    </cofactor>
    <cofactor evidence="1">
        <name>Mn(2+)</name>
        <dbReference type="ChEBI" id="CHEBI:29035"/>
    </cofactor>
    <text evidence="1">Binds 2 divalent metal cations per subunit. Magnesium or manganese.</text>
</comment>
<comment type="pathway">
    <text evidence="1">Cofactor biosynthesis; riboflavin biosynthesis; 2-hydroxy-3-oxobutyl phosphate from D-ribulose 5-phosphate: step 1/1.</text>
</comment>
<comment type="subunit">
    <text evidence="1">Homodimer.</text>
</comment>
<comment type="similarity">
    <text evidence="1">Belongs to the DHBP synthase family.</text>
</comment>